<keyword id="KW-1185">Reference proteome</keyword>
<keyword id="KW-0687">Ribonucleoprotein</keyword>
<keyword id="KW-0689">Ribosomal protein</keyword>
<keyword id="KW-0694">RNA-binding</keyword>
<keyword id="KW-0699">rRNA-binding</keyword>
<feature type="chain" id="PRO_0000228909" description="Small ribosomal subunit protein uS4">
    <location>
        <begin position="1"/>
        <end position="209"/>
    </location>
</feature>
<feature type="domain" description="S4 RNA-binding" evidence="1">
    <location>
        <begin position="98"/>
        <end position="159"/>
    </location>
</feature>
<reference key="1">
    <citation type="submission" date="2005-10" db="EMBL/GenBank/DDBJ databases">
        <title>Complete sequence of Pelobacter carbinolicus DSM 2380.</title>
        <authorList>
            <person name="Copeland A."/>
            <person name="Lucas S."/>
            <person name="Lapidus A."/>
            <person name="Barry K."/>
            <person name="Detter J.C."/>
            <person name="Glavina T."/>
            <person name="Hammon N."/>
            <person name="Israni S."/>
            <person name="Pitluck S."/>
            <person name="Chertkov O."/>
            <person name="Schmutz J."/>
            <person name="Larimer F."/>
            <person name="Land M."/>
            <person name="Kyrpides N."/>
            <person name="Ivanova N."/>
            <person name="Richardson P."/>
        </authorList>
    </citation>
    <scope>NUCLEOTIDE SEQUENCE [LARGE SCALE GENOMIC DNA]</scope>
    <source>
        <strain>DSM 2380 / NBRC 103641 / GraBd1</strain>
    </source>
</reference>
<gene>
    <name evidence="1" type="primary">rpsD</name>
    <name type="ordered locus">Pcar_0727</name>
</gene>
<protein>
    <recommendedName>
        <fullName evidence="1">Small ribosomal subunit protein uS4</fullName>
    </recommendedName>
    <alternativeName>
        <fullName evidence="2">30S ribosomal protein S4</fullName>
    </alternativeName>
</protein>
<proteinExistence type="inferred from homology"/>
<name>RS4_SYNC1</name>
<accession>Q3A6M1</accession>
<sequence length="209" mass="24308">MARYTGPVCRLCRRETMKLFLKGDRCYTDKCALERRNYAPGQHGQGRTKVSDYGTQLREKQRMKRTYGLLEKQFRAYFDKADSMKGVTGENLLVLLERRLDSAVYRLGFASSRTEGRALVRQGHFLVNGRKVNIPSYVMRPNDVIELREKSRKITRINDALDGVMRRGLPSWVELDREAFKGTFKTLPVREEMTTPAFQEQLIVELYSK</sequence>
<dbReference type="EMBL" id="CP000142">
    <property type="protein sequence ID" value="ABA87986.1"/>
    <property type="molecule type" value="Genomic_DNA"/>
</dbReference>
<dbReference type="RefSeq" id="WP_011340429.1">
    <property type="nucleotide sequence ID" value="NC_007498.2"/>
</dbReference>
<dbReference type="SMR" id="Q3A6M1"/>
<dbReference type="STRING" id="338963.Pcar_0727"/>
<dbReference type="KEGG" id="pca:Pcar_0727"/>
<dbReference type="eggNOG" id="COG0522">
    <property type="taxonomic scope" value="Bacteria"/>
</dbReference>
<dbReference type="HOGENOM" id="CLU_092403_0_2_7"/>
<dbReference type="OrthoDB" id="9803672at2"/>
<dbReference type="Proteomes" id="UP000002534">
    <property type="component" value="Chromosome"/>
</dbReference>
<dbReference type="GO" id="GO:0015935">
    <property type="term" value="C:small ribosomal subunit"/>
    <property type="evidence" value="ECO:0007669"/>
    <property type="project" value="InterPro"/>
</dbReference>
<dbReference type="GO" id="GO:0019843">
    <property type="term" value="F:rRNA binding"/>
    <property type="evidence" value="ECO:0007669"/>
    <property type="project" value="UniProtKB-UniRule"/>
</dbReference>
<dbReference type="GO" id="GO:0003735">
    <property type="term" value="F:structural constituent of ribosome"/>
    <property type="evidence" value="ECO:0007669"/>
    <property type="project" value="InterPro"/>
</dbReference>
<dbReference type="GO" id="GO:0042274">
    <property type="term" value="P:ribosomal small subunit biogenesis"/>
    <property type="evidence" value="ECO:0007669"/>
    <property type="project" value="TreeGrafter"/>
</dbReference>
<dbReference type="GO" id="GO:0006412">
    <property type="term" value="P:translation"/>
    <property type="evidence" value="ECO:0007669"/>
    <property type="project" value="UniProtKB-UniRule"/>
</dbReference>
<dbReference type="CDD" id="cd00165">
    <property type="entry name" value="S4"/>
    <property type="match status" value="1"/>
</dbReference>
<dbReference type="FunFam" id="1.10.1050.10:FF:000001">
    <property type="entry name" value="30S ribosomal protein S4"/>
    <property type="match status" value="1"/>
</dbReference>
<dbReference type="FunFam" id="3.10.290.10:FF:000001">
    <property type="entry name" value="30S ribosomal protein S4"/>
    <property type="match status" value="1"/>
</dbReference>
<dbReference type="Gene3D" id="1.10.1050.10">
    <property type="entry name" value="Ribosomal Protein S4 Delta 41, Chain A, domain 1"/>
    <property type="match status" value="1"/>
</dbReference>
<dbReference type="Gene3D" id="3.10.290.10">
    <property type="entry name" value="RNA-binding S4 domain"/>
    <property type="match status" value="1"/>
</dbReference>
<dbReference type="HAMAP" id="MF_01306_B">
    <property type="entry name" value="Ribosomal_uS4_B"/>
    <property type="match status" value="1"/>
</dbReference>
<dbReference type="InterPro" id="IPR022801">
    <property type="entry name" value="Ribosomal_uS4"/>
</dbReference>
<dbReference type="InterPro" id="IPR005709">
    <property type="entry name" value="Ribosomal_uS4_bac-type"/>
</dbReference>
<dbReference type="InterPro" id="IPR001912">
    <property type="entry name" value="Ribosomal_uS4_N"/>
</dbReference>
<dbReference type="InterPro" id="IPR002942">
    <property type="entry name" value="S4_RNA-bd"/>
</dbReference>
<dbReference type="InterPro" id="IPR036986">
    <property type="entry name" value="S4_RNA-bd_sf"/>
</dbReference>
<dbReference type="NCBIfam" id="NF003717">
    <property type="entry name" value="PRK05327.1"/>
    <property type="match status" value="1"/>
</dbReference>
<dbReference type="NCBIfam" id="TIGR01017">
    <property type="entry name" value="rpsD_bact"/>
    <property type="match status" value="1"/>
</dbReference>
<dbReference type="PANTHER" id="PTHR11831">
    <property type="entry name" value="30S 40S RIBOSOMAL PROTEIN"/>
    <property type="match status" value="1"/>
</dbReference>
<dbReference type="PANTHER" id="PTHR11831:SF4">
    <property type="entry name" value="SMALL RIBOSOMAL SUBUNIT PROTEIN US4M"/>
    <property type="match status" value="1"/>
</dbReference>
<dbReference type="Pfam" id="PF00163">
    <property type="entry name" value="Ribosomal_S4"/>
    <property type="match status" value="1"/>
</dbReference>
<dbReference type="Pfam" id="PF01479">
    <property type="entry name" value="S4"/>
    <property type="match status" value="1"/>
</dbReference>
<dbReference type="SMART" id="SM01390">
    <property type="entry name" value="Ribosomal_S4"/>
    <property type="match status" value="1"/>
</dbReference>
<dbReference type="SMART" id="SM00363">
    <property type="entry name" value="S4"/>
    <property type="match status" value="1"/>
</dbReference>
<dbReference type="SUPFAM" id="SSF55174">
    <property type="entry name" value="Alpha-L RNA-binding motif"/>
    <property type="match status" value="1"/>
</dbReference>
<dbReference type="PROSITE" id="PS50889">
    <property type="entry name" value="S4"/>
    <property type="match status" value="1"/>
</dbReference>
<comment type="function">
    <text evidence="1">One of the primary rRNA binding proteins, it binds directly to 16S rRNA where it nucleates assembly of the body of the 30S subunit.</text>
</comment>
<comment type="function">
    <text evidence="1">With S5 and S12 plays an important role in translational accuracy.</text>
</comment>
<comment type="subunit">
    <text evidence="1">Part of the 30S ribosomal subunit. Contacts protein S5. The interaction surface between S4 and S5 is involved in control of translational fidelity.</text>
</comment>
<comment type="similarity">
    <text evidence="1">Belongs to the universal ribosomal protein uS4 family.</text>
</comment>
<organism>
    <name type="scientific">Syntrophotalea carbinolica (strain DSM 2380 / NBRC 103641 / GraBd1)</name>
    <name type="common">Pelobacter carbinolicus</name>
    <dbReference type="NCBI Taxonomy" id="338963"/>
    <lineage>
        <taxon>Bacteria</taxon>
        <taxon>Pseudomonadati</taxon>
        <taxon>Thermodesulfobacteriota</taxon>
        <taxon>Desulfuromonadia</taxon>
        <taxon>Desulfuromonadales</taxon>
        <taxon>Syntrophotaleaceae</taxon>
        <taxon>Syntrophotalea</taxon>
    </lineage>
</organism>
<evidence type="ECO:0000255" key="1">
    <source>
        <dbReference type="HAMAP-Rule" id="MF_01306"/>
    </source>
</evidence>
<evidence type="ECO:0000305" key="2"/>